<dbReference type="EMBL" id="M74048">
    <property type="protein sequence ID" value="AAA34445.1"/>
    <property type="molecule type" value="Genomic_DNA"/>
</dbReference>
<dbReference type="EMBL" id="X74152">
    <property type="protein sequence ID" value="CAA52265.1"/>
    <property type="molecule type" value="Genomic_DNA"/>
</dbReference>
<dbReference type="EMBL" id="Z28016">
    <property type="protein sequence ID" value="CAA81851.1"/>
    <property type="molecule type" value="Genomic_DNA"/>
</dbReference>
<dbReference type="EMBL" id="AY558349">
    <property type="protein sequence ID" value="AAS56675.1"/>
    <property type="molecule type" value="Genomic_DNA"/>
</dbReference>
<dbReference type="EMBL" id="BK006944">
    <property type="protein sequence ID" value="DAA09140.1"/>
    <property type="molecule type" value="Genomic_DNA"/>
</dbReference>
<dbReference type="PIR" id="A41168">
    <property type="entry name" value="A41168"/>
</dbReference>
<dbReference type="RefSeq" id="NP_012909.3">
    <property type="nucleotide sequence ID" value="NM_001179582.3"/>
</dbReference>
<dbReference type="PDB" id="6B2Z">
    <property type="method" value="EM"/>
    <property type="resolution" value="3.60 A"/>
    <property type="chains" value="O/d=2-174"/>
</dbReference>
<dbReference type="PDB" id="6B8H">
    <property type="method" value="EM"/>
    <property type="resolution" value="3.60 A"/>
    <property type="chains" value="d/r=2-174"/>
</dbReference>
<dbReference type="PDB" id="6CP3">
    <property type="method" value="EM"/>
    <property type="resolution" value="3.80 A"/>
    <property type="chains" value="7=2-174"/>
</dbReference>
<dbReference type="PDB" id="6CP5">
    <property type="method" value="EM"/>
    <property type="resolution" value="4.20 A"/>
    <property type="chains" value="7=2-174"/>
</dbReference>
<dbReference type="PDB" id="6CP6">
    <property type="method" value="EM"/>
    <property type="resolution" value="3.60 A"/>
    <property type="chains" value="7=2-174"/>
</dbReference>
<dbReference type="PDB" id="6CP7">
    <property type="method" value="EM"/>
    <property type="resolution" value="4.10 A"/>
    <property type="chains" value="7=2-174"/>
</dbReference>
<dbReference type="PDB" id="6WTD">
    <property type="method" value="EM"/>
    <property type="resolution" value="4.20 A"/>
    <property type="chains" value="7=2-174"/>
</dbReference>
<dbReference type="PDB" id="7TJY">
    <property type="method" value="EM"/>
    <property type="resolution" value="3.80 A"/>
    <property type="chains" value="V=2-174"/>
</dbReference>
<dbReference type="PDB" id="7TJZ">
    <property type="method" value="EM"/>
    <property type="resolution" value="4.40 A"/>
    <property type="chains" value="V=2-174"/>
</dbReference>
<dbReference type="PDB" id="7TK0">
    <property type="method" value="EM"/>
    <property type="resolution" value="4.40 A"/>
    <property type="chains" value="V=2-174"/>
</dbReference>
<dbReference type="PDB" id="7TK1">
    <property type="method" value="EM"/>
    <property type="resolution" value="7.10 A"/>
    <property type="chains" value="V=2-174"/>
</dbReference>
<dbReference type="PDB" id="7TK2">
    <property type="method" value="EM"/>
    <property type="resolution" value="6.50 A"/>
    <property type="chains" value="V=2-174"/>
</dbReference>
<dbReference type="PDB" id="7TK3">
    <property type="method" value="EM"/>
    <property type="resolution" value="6.30 A"/>
    <property type="chains" value="V=2-174"/>
</dbReference>
<dbReference type="PDB" id="7TK4">
    <property type="method" value="EM"/>
    <property type="resolution" value="7.00 A"/>
    <property type="chains" value="V=2-174"/>
</dbReference>
<dbReference type="PDB" id="7TK5">
    <property type="method" value="EM"/>
    <property type="resolution" value="7.80 A"/>
    <property type="chains" value="V=2-174"/>
</dbReference>
<dbReference type="PDB" id="7TK6">
    <property type="method" value="EM"/>
    <property type="resolution" value="6.50 A"/>
    <property type="chains" value="V=2-174"/>
</dbReference>
<dbReference type="PDB" id="7TK7">
    <property type="method" value="EM"/>
    <property type="resolution" value="6.70 A"/>
    <property type="chains" value="V=2-174"/>
</dbReference>
<dbReference type="PDB" id="7TK8">
    <property type="method" value="EM"/>
    <property type="resolution" value="4.70 A"/>
    <property type="chains" value="V=2-174"/>
</dbReference>
<dbReference type="PDB" id="7TK9">
    <property type="method" value="EM"/>
    <property type="resolution" value="6.00 A"/>
    <property type="chains" value="V=2-174"/>
</dbReference>
<dbReference type="PDB" id="7TKA">
    <property type="method" value="EM"/>
    <property type="resolution" value="7.10 A"/>
    <property type="chains" value="V=2-174"/>
</dbReference>
<dbReference type="PDB" id="7TKB">
    <property type="method" value="EM"/>
    <property type="resolution" value="6.30 A"/>
    <property type="chains" value="V=2-174"/>
</dbReference>
<dbReference type="PDB" id="7TKC">
    <property type="method" value="EM"/>
    <property type="resolution" value="5.80 A"/>
    <property type="chains" value="V=2-174"/>
</dbReference>
<dbReference type="PDB" id="7TKD">
    <property type="method" value="EM"/>
    <property type="resolution" value="7.70 A"/>
    <property type="chains" value="V=2-174"/>
</dbReference>
<dbReference type="PDB" id="7TKE">
    <property type="method" value="EM"/>
    <property type="resolution" value="7.10 A"/>
    <property type="chains" value="V=2-174"/>
</dbReference>
<dbReference type="PDB" id="7TKF">
    <property type="method" value="EM"/>
    <property type="resolution" value="7.10 A"/>
    <property type="chains" value="V=2-174"/>
</dbReference>
<dbReference type="PDB" id="7TKG">
    <property type="method" value="EM"/>
    <property type="resolution" value="4.50 A"/>
    <property type="chains" value="V=2-174"/>
</dbReference>
<dbReference type="PDB" id="7TKH">
    <property type="method" value="EM"/>
    <property type="resolution" value="4.40 A"/>
    <property type="chains" value="V=2-174"/>
</dbReference>
<dbReference type="PDB" id="7TKI">
    <property type="method" value="EM"/>
    <property type="resolution" value="7.10 A"/>
    <property type="chains" value="V=2-174"/>
</dbReference>
<dbReference type="PDB" id="7TKJ">
    <property type="method" value="EM"/>
    <property type="resolution" value="7.50 A"/>
    <property type="chains" value="V=2-174"/>
</dbReference>
<dbReference type="PDB" id="7TKK">
    <property type="method" value="EM"/>
    <property type="resolution" value="7.30 A"/>
    <property type="chains" value="V=2-174"/>
</dbReference>
<dbReference type="PDB" id="7TKL">
    <property type="method" value="EM"/>
    <property type="resolution" value="6.40 A"/>
    <property type="chains" value="V=2-174"/>
</dbReference>
<dbReference type="PDB" id="7TKM">
    <property type="method" value="EM"/>
    <property type="resolution" value="4.50 A"/>
    <property type="chains" value="V=2-174"/>
</dbReference>
<dbReference type="PDB" id="7TKN">
    <property type="method" value="EM"/>
    <property type="resolution" value="7.10 A"/>
    <property type="chains" value="V=2-174"/>
</dbReference>
<dbReference type="PDB" id="7TKO">
    <property type="method" value="EM"/>
    <property type="resolution" value="4.80 A"/>
    <property type="chains" value="V=2-174"/>
</dbReference>
<dbReference type="PDB" id="7TKP">
    <property type="method" value="EM"/>
    <property type="resolution" value="4.60 A"/>
    <property type="chains" value="V=2-174"/>
</dbReference>
<dbReference type="PDB" id="7TKQ">
    <property type="method" value="EM"/>
    <property type="resolution" value="4.50 A"/>
    <property type="chains" value="V=2-174"/>
</dbReference>
<dbReference type="PDB" id="7TKR">
    <property type="method" value="EM"/>
    <property type="resolution" value="6.50 A"/>
    <property type="chains" value="V=2-174"/>
</dbReference>
<dbReference type="PDB" id="7TKS">
    <property type="method" value="EM"/>
    <property type="resolution" value="7.50 A"/>
    <property type="chains" value="V=2-174"/>
</dbReference>
<dbReference type="PDB" id="8F29">
    <property type="method" value="EM"/>
    <property type="resolution" value="4.00 A"/>
    <property type="chains" value="7=4-174"/>
</dbReference>
<dbReference type="PDB" id="8F39">
    <property type="method" value="EM"/>
    <property type="resolution" value="3.50 A"/>
    <property type="chains" value="7=4-174"/>
</dbReference>
<dbReference type="PDB" id="8FKJ">
    <property type="method" value="EM"/>
    <property type="resolution" value="4.20 A"/>
    <property type="chains" value="7=4-174"/>
</dbReference>
<dbReference type="PDB" id="8FL8">
    <property type="method" value="EM"/>
    <property type="resolution" value="4.20 A"/>
    <property type="chains" value="7=4-174"/>
</dbReference>
<dbReference type="PDBsum" id="6B2Z"/>
<dbReference type="PDBsum" id="6B8H"/>
<dbReference type="PDBsum" id="6CP3"/>
<dbReference type="PDBsum" id="6CP5"/>
<dbReference type="PDBsum" id="6CP6"/>
<dbReference type="PDBsum" id="6CP7"/>
<dbReference type="PDBsum" id="6WTD"/>
<dbReference type="PDBsum" id="7TJY"/>
<dbReference type="PDBsum" id="7TJZ"/>
<dbReference type="PDBsum" id="7TK0"/>
<dbReference type="PDBsum" id="7TK1"/>
<dbReference type="PDBsum" id="7TK2"/>
<dbReference type="PDBsum" id="7TK3"/>
<dbReference type="PDBsum" id="7TK4"/>
<dbReference type="PDBsum" id="7TK5"/>
<dbReference type="PDBsum" id="7TK6"/>
<dbReference type="PDBsum" id="7TK7"/>
<dbReference type="PDBsum" id="7TK8"/>
<dbReference type="PDBsum" id="7TK9"/>
<dbReference type="PDBsum" id="7TKA"/>
<dbReference type="PDBsum" id="7TKB"/>
<dbReference type="PDBsum" id="7TKC"/>
<dbReference type="PDBsum" id="7TKD"/>
<dbReference type="PDBsum" id="7TKE"/>
<dbReference type="PDBsum" id="7TKF"/>
<dbReference type="PDBsum" id="7TKG"/>
<dbReference type="PDBsum" id="7TKH"/>
<dbReference type="PDBsum" id="7TKI"/>
<dbReference type="PDBsum" id="7TKJ"/>
<dbReference type="PDBsum" id="7TKK"/>
<dbReference type="PDBsum" id="7TKL"/>
<dbReference type="PDBsum" id="7TKM"/>
<dbReference type="PDBsum" id="7TKN"/>
<dbReference type="PDBsum" id="7TKO"/>
<dbReference type="PDBsum" id="7TKP"/>
<dbReference type="PDBsum" id="7TKQ"/>
<dbReference type="PDBsum" id="7TKR"/>
<dbReference type="PDBsum" id="7TKS"/>
<dbReference type="PDBsum" id="8F29"/>
<dbReference type="PDBsum" id="8F39"/>
<dbReference type="PDBsum" id="8FKJ"/>
<dbReference type="PDBsum" id="8FL8"/>
<dbReference type="EMDB" id="EMD-21894"/>
<dbReference type="EMDB" id="EMD-25946"/>
<dbReference type="EMDB" id="EMD-25947"/>
<dbReference type="EMDB" id="EMD-25948"/>
<dbReference type="EMDB" id="EMD-25949"/>
<dbReference type="EMDB" id="EMD-25954"/>
<dbReference type="EMDB" id="EMD-25955"/>
<dbReference type="EMDB" id="EMD-25956"/>
<dbReference type="EMDB" id="EMD-25957"/>
<dbReference type="EMDB" id="EMD-25958"/>
<dbReference type="EMDB" id="EMD-25959"/>
<dbReference type="EMDB" id="EMD-25960"/>
<dbReference type="EMDB" id="EMD-25961"/>
<dbReference type="EMDB" id="EMD-25962"/>
<dbReference type="EMDB" id="EMD-25963"/>
<dbReference type="EMDB" id="EMD-25964"/>
<dbReference type="EMDB" id="EMD-25965"/>
<dbReference type="EMDB" id="EMD-25966"/>
<dbReference type="EMDB" id="EMD-25967"/>
<dbReference type="EMDB" id="EMD-25968"/>
<dbReference type="EMDB" id="EMD-25969"/>
<dbReference type="EMDB" id="EMD-25970"/>
<dbReference type="EMDB" id="EMD-25971"/>
<dbReference type="EMDB" id="EMD-25972"/>
<dbReference type="EMDB" id="EMD-25973"/>
<dbReference type="EMDB" id="EMD-25974"/>
<dbReference type="EMDB" id="EMD-25975"/>
<dbReference type="EMDB" id="EMD-25976"/>
<dbReference type="EMDB" id="EMD-25977"/>
<dbReference type="EMDB" id="EMD-25978"/>
<dbReference type="EMDB" id="EMD-25979"/>
<dbReference type="EMDB" id="EMD-25980"/>
<dbReference type="EMDB" id="EMD-28809"/>
<dbReference type="EMDB" id="EMD-28835"/>
<dbReference type="EMDB" id="EMD-29250"/>
<dbReference type="EMDB" id="EMD-29270"/>
<dbReference type="EMDB" id="EMD-7036"/>
<dbReference type="EMDB" id="EMD-7546"/>
<dbReference type="EMDB" id="EMD-7547"/>
<dbReference type="EMDB" id="EMD-7548"/>
<dbReference type="EMDB" id="EMD-7549"/>
<dbReference type="SMR" id="P30902"/>
<dbReference type="BioGRID" id="34116">
    <property type="interactions" value="282"/>
</dbReference>
<dbReference type="ComplexPortal" id="CPX-3281">
    <property type="entry name" value="Mitochondrial proton-transporting ATP synthase complex"/>
</dbReference>
<dbReference type="DIP" id="DIP-3039N"/>
<dbReference type="FunCoup" id="P30902">
    <property type="interactions" value="689"/>
</dbReference>
<dbReference type="IntAct" id="P30902">
    <property type="interactions" value="28"/>
</dbReference>
<dbReference type="MINT" id="P30902"/>
<dbReference type="STRING" id="4932.YKL016C"/>
<dbReference type="TCDB" id="3.A.2.1.3">
    <property type="family name" value="the h+- or na+-translocating f-type, v-type and a-type atpase (f-atpase) superfamily"/>
</dbReference>
<dbReference type="iPTMnet" id="P30902"/>
<dbReference type="PaxDb" id="4932-YKL016C"/>
<dbReference type="PeptideAtlas" id="P30902"/>
<dbReference type="EnsemblFungi" id="YKL016C_mRNA">
    <property type="protein sequence ID" value="YKL016C"/>
    <property type="gene ID" value="YKL016C"/>
</dbReference>
<dbReference type="GeneID" id="853853"/>
<dbReference type="KEGG" id="sce:YKL016C"/>
<dbReference type="AGR" id="SGD:S000001499"/>
<dbReference type="SGD" id="S000001499">
    <property type="gene designation" value="ATP7"/>
</dbReference>
<dbReference type="VEuPathDB" id="FungiDB:YKL016C"/>
<dbReference type="eggNOG" id="KOG3366">
    <property type="taxonomic scope" value="Eukaryota"/>
</dbReference>
<dbReference type="GeneTree" id="ENSGT00390000003582"/>
<dbReference type="HOGENOM" id="CLU_080463_0_0_1"/>
<dbReference type="InParanoid" id="P30902"/>
<dbReference type="OMA" id="VSKGRWA"/>
<dbReference type="OrthoDB" id="35799at2759"/>
<dbReference type="BioCyc" id="YEAST:G3O-31825-MONOMER"/>
<dbReference type="Reactome" id="R-SCE-9837999">
    <property type="pathway name" value="Mitochondrial protein degradation"/>
</dbReference>
<dbReference type="BioGRID-ORCS" id="853853">
    <property type="hits" value="3 hits in 10 CRISPR screens"/>
</dbReference>
<dbReference type="PRO" id="PR:P30902"/>
<dbReference type="Proteomes" id="UP000002311">
    <property type="component" value="Chromosome XI"/>
</dbReference>
<dbReference type="RNAct" id="P30902">
    <property type="molecule type" value="protein"/>
</dbReference>
<dbReference type="GO" id="GO:0005743">
    <property type="term" value="C:mitochondrial inner membrane"/>
    <property type="evidence" value="ECO:0000314"/>
    <property type="project" value="ComplexPortal"/>
</dbReference>
<dbReference type="GO" id="GO:0005739">
    <property type="term" value="C:mitochondrion"/>
    <property type="evidence" value="ECO:0007005"/>
    <property type="project" value="SGD"/>
</dbReference>
<dbReference type="GO" id="GO:0045259">
    <property type="term" value="C:proton-transporting ATP synthase complex"/>
    <property type="evidence" value="ECO:0000314"/>
    <property type="project" value="SGD"/>
</dbReference>
<dbReference type="GO" id="GO:0015078">
    <property type="term" value="F:proton transmembrane transporter activity"/>
    <property type="evidence" value="ECO:0007669"/>
    <property type="project" value="InterPro"/>
</dbReference>
<dbReference type="GO" id="GO:0015986">
    <property type="term" value="P:proton motive force-driven ATP synthesis"/>
    <property type="evidence" value="ECO:0000314"/>
    <property type="project" value="ComplexPortal"/>
</dbReference>
<dbReference type="Gene3D" id="6.10.280.70">
    <property type="match status" value="1"/>
</dbReference>
<dbReference type="InterPro" id="IPR008689">
    <property type="entry name" value="ATP_synth_F0_dsu_mt"/>
</dbReference>
<dbReference type="InterPro" id="IPR036228">
    <property type="entry name" value="ATP_synth_F0_dsu_sf_mt"/>
</dbReference>
<dbReference type="PANTHER" id="PTHR12700">
    <property type="entry name" value="ATP SYNTHASE SUBUNIT D, MITOCHONDRIAL"/>
    <property type="match status" value="1"/>
</dbReference>
<dbReference type="Pfam" id="PF05873">
    <property type="entry name" value="Mt_ATP-synt_D"/>
    <property type="match status" value="1"/>
</dbReference>
<dbReference type="PIRSF" id="PIRSF005514">
    <property type="entry name" value="ATPase_F0_D_mt"/>
    <property type="match status" value="1"/>
</dbReference>
<dbReference type="SUPFAM" id="SSF161065">
    <property type="entry name" value="ATP synthase D chain-like"/>
    <property type="match status" value="1"/>
</dbReference>
<sequence length="174" mass="19810">MSLAKSAANKLDWAKVISSLRITGSTATQLSSFKKRNDEARRQLLELQSQPTEVDFSHYRSVLKNTSVIDKIESYVKQYKPVKIDASKQLQVIESFEKHAMTNAKETESLVSKELKDLQSTLDNIQSARPFDELTVDDLTKIKPEIDAKVEEMVKKGKWDVPGYKDRFGNLNVM</sequence>
<keyword id="KW-0002">3D-structure</keyword>
<keyword id="KW-0007">Acetylation</keyword>
<keyword id="KW-0066">ATP synthesis</keyword>
<keyword id="KW-0138">CF(0)</keyword>
<keyword id="KW-0903">Direct protein sequencing</keyword>
<keyword id="KW-0375">Hydrogen ion transport</keyword>
<keyword id="KW-0406">Ion transport</keyword>
<keyword id="KW-0472">Membrane</keyword>
<keyword id="KW-0496">Mitochondrion</keyword>
<keyword id="KW-0999">Mitochondrion inner membrane</keyword>
<keyword id="KW-1185">Reference proteome</keyword>
<keyword id="KW-0813">Transport</keyword>
<feature type="initiator methionine" description="Removed" evidence="2">
    <location>
        <position position="1"/>
    </location>
</feature>
<feature type="chain" id="PRO_0000071681" description="ATP synthase subunit d, mitochondrial">
    <location>
        <begin position="2"/>
        <end position="174"/>
    </location>
</feature>
<feature type="modified residue" description="N-acetylserine" evidence="2">
    <location>
        <position position="2"/>
    </location>
</feature>
<protein>
    <recommendedName>
        <fullName>ATP synthase subunit d, mitochondrial</fullName>
    </recommendedName>
</protein>
<reference key="1">
    <citation type="journal article" date="1991" name="J. Biol. Chem.">
        <title>ATP synthase of yeast mitochondria. Characterization of subunit d and sequence analysis of the structural gene ATP7.</title>
        <authorList>
            <person name="Norais N."/>
            <person name="Prome D."/>
            <person name="Velours J."/>
        </authorList>
    </citation>
    <scope>NUCLEOTIDE SEQUENCE [GENOMIC DNA]</scope>
    <scope>CLEAVAGE OF INITIATOR METHIONINE</scope>
    <scope>ACETYLATION AT SER-2</scope>
    <scope>PARTIAL PROTEIN SEQUENCE</scope>
</reference>
<reference key="2">
    <citation type="journal article" date="1993" name="Yeast">
        <title>Sequencing and analysis of 51.6 kilobases on the left arm of chromosome XI from Saccharomyces cerevisiae reveals 23 open reading frames including the FAS1 gene.</title>
        <authorList>
            <person name="Wiemann S."/>
            <person name="Voss H."/>
            <person name="Schwager C."/>
            <person name="Rupp T."/>
            <person name="Stegemann J."/>
            <person name="Zimmermann J."/>
            <person name="Grothues D."/>
            <person name="Sensen C."/>
            <person name="Erfle H."/>
            <person name="Hewitt N."/>
            <person name="Banrevi A."/>
            <person name="Ansorge W."/>
        </authorList>
    </citation>
    <scope>NUCLEOTIDE SEQUENCE [GENOMIC DNA]</scope>
</reference>
<reference key="3">
    <citation type="journal article" date="1994" name="Nature">
        <title>Complete DNA sequence of yeast chromosome XI.</title>
        <authorList>
            <person name="Dujon B."/>
            <person name="Alexandraki D."/>
            <person name="Andre B."/>
            <person name="Ansorge W."/>
            <person name="Baladron V."/>
            <person name="Ballesta J.P.G."/>
            <person name="Banrevi A."/>
            <person name="Bolle P.-A."/>
            <person name="Bolotin-Fukuhara M."/>
            <person name="Bossier P."/>
            <person name="Bou G."/>
            <person name="Boyer J."/>
            <person name="Buitrago M.J."/>
            <person name="Cheret G."/>
            <person name="Colleaux L."/>
            <person name="Daignan-Fornier B."/>
            <person name="del Rey F."/>
            <person name="Dion C."/>
            <person name="Domdey H."/>
            <person name="Duesterhoeft A."/>
            <person name="Duesterhus S."/>
            <person name="Entian K.-D."/>
            <person name="Erfle H."/>
            <person name="Esteban P.F."/>
            <person name="Feldmann H."/>
            <person name="Fernandes L."/>
            <person name="Fobo G.M."/>
            <person name="Fritz C."/>
            <person name="Fukuhara H."/>
            <person name="Gabel C."/>
            <person name="Gaillon L."/>
            <person name="Garcia-Cantalejo J.M."/>
            <person name="Garcia-Ramirez J.J."/>
            <person name="Gent M.E."/>
            <person name="Ghazvini M."/>
            <person name="Goffeau A."/>
            <person name="Gonzalez A."/>
            <person name="Grothues D."/>
            <person name="Guerreiro P."/>
            <person name="Hegemann J.H."/>
            <person name="Hewitt N."/>
            <person name="Hilger F."/>
            <person name="Hollenberg C.P."/>
            <person name="Horaitis O."/>
            <person name="Indge K.J."/>
            <person name="Jacquier A."/>
            <person name="James C.M."/>
            <person name="Jauniaux J.-C."/>
            <person name="Jimenez A."/>
            <person name="Keuchel H."/>
            <person name="Kirchrath L."/>
            <person name="Kleine K."/>
            <person name="Koetter P."/>
            <person name="Legrain P."/>
            <person name="Liebl S."/>
            <person name="Louis E.J."/>
            <person name="Maia e Silva A."/>
            <person name="Marck C."/>
            <person name="Monnier A.-L."/>
            <person name="Moestl D."/>
            <person name="Mueller S."/>
            <person name="Obermaier B."/>
            <person name="Oliver S.G."/>
            <person name="Pallier C."/>
            <person name="Pascolo S."/>
            <person name="Pfeiffer F."/>
            <person name="Philippsen P."/>
            <person name="Planta R.J."/>
            <person name="Pohl F.M."/>
            <person name="Pohl T.M."/>
            <person name="Poehlmann R."/>
            <person name="Portetelle D."/>
            <person name="Purnelle B."/>
            <person name="Puzos V."/>
            <person name="Ramezani Rad M."/>
            <person name="Rasmussen S.W."/>
            <person name="Remacha M.A."/>
            <person name="Revuelta J.L."/>
            <person name="Richard G.-F."/>
            <person name="Rieger M."/>
            <person name="Rodrigues-Pousada C."/>
            <person name="Rose M."/>
            <person name="Rupp T."/>
            <person name="Santos M.A."/>
            <person name="Schwager C."/>
            <person name="Sensen C."/>
            <person name="Skala J."/>
            <person name="Soares H."/>
            <person name="Sor F."/>
            <person name="Stegemann J."/>
            <person name="Tettelin H."/>
            <person name="Thierry A."/>
            <person name="Tzermia M."/>
            <person name="Urrestarazu L.A."/>
            <person name="van Dyck L."/>
            <person name="van Vliet-Reedijk J.C."/>
            <person name="Valens M."/>
            <person name="Vandenbol M."/>
            <person name="Vilela C."/>
            <person name="Vissers S."/>
            <person name="von Wettstein D."/>
            <person name="Voss H."/>
            <person name="Wiemann S."/>
            <person name="Xu G."/>
            <person name="Zimmermann J."/>
            <person name="Haasemann M."/>
            <person name="Becker I."/>
            <person name="Mewes H.-W."/>
        </authorList>
    </citation>
    <scope>NUCLEOTIDE SEQUENCE [LARGE SCALE GENOMIC DNA]</scope>
    <source>
        <strain>ATCC 204508 / S288c</strain>
    </source>
</reference>
<reference key="4">
    <citation type="journal article" date="2014" name="G3 (Bethesda)">
        <title>The reference genome sequence of Saccharomyces cerevisiae: Then and now.</title>
        <authorList>
            <person name="Engel S.R."/>
            <person name="Dietrich F.S."/>
            <person name="Fisk D.G."/>
            <person name="Binkley G."/>
            <person name="Balakrishnan R."/>
            <person name="Costanzo M.C."/>
            <person name="Dwight S.S."/>
            <person name="Hitz B.C."/>
            <person name="Karra K."/>
            <person name="Nash R.S."/>
            <person name="Weng S."/>
            <person name="Wong E.D."/>
            <person name="Lloyd P."/>
            <person name="Skrzypek M.S."/>
            <person name="Miyasato S.R."/>
            <person name="Simison M."/>
            <person name="Cherry J.M."/>
        </authorList>
    </citation>
    <scope>GENOME REANNOTATION</scope>
    <source>
        <strain>ATCC 204508 / S288c</strain>
    </source>
</reference>
<reference key="5">
    <citation type="journal article" date="2007" name="Genome Res.">
        <title>Approaching a complete repository of sequence-verified protein-encoding clones for Saccharomyces cerevisiae.</title>
        <authorList>
            <person name="Hu Y."/>
            <person name="Rolfs A."/>
            <person name="Bhullar B."/>
            <person name="Murthy T.V.S."/>
            <person name="Zhu C."/>
            <person name="Berger M.F."/>
            <person name="Camargo A.A."/>
            <person name="Kelley F."/>
            <person name="McCarron S."/>
            <person name="Jepson D."/>
            <person name="Richardson A."/>
            <person name="Raphael J."/>
            <person name="Moreira D."/>
            <person name="Taycher E."/>
            <person name="Zuo D."/>
            <person name="Mohr S."/>
            <person name="Kane M.F."/>
            <person name="Williamson J."/>
            <person name="Simpson A.J.G."/>
            <person name="Bulyk M.L."/>
            <person name="Harlow E."/>
            <person name="Marsischky G."/>
            <person name="Kolodner R.D."/>
            <person name="LaBaer J."/>
        </authorList>
    </citation>
    <scope>NUCLEOTIDE SEQUENCE [GENOMIC DNA]</scope>
    <source>
        <strain>ATCC 204508 / S288c</strain>
    </source>
</reference>
<reference key="6">
    <citation type="journal article" date="2003" name="Nature">
        <title>Global analysis of protein expression in yeast.</title>
        <authorList>
            <person name="Ghaemmaghami S."/>
            <person name="Huh W.-K."/>
            <person name="Bower K."/>
            <person name="Howson R.W."/>
            <person name="Belle A."/>
            <person name="Dephoure N."/>
            <person name="O'Shea E.K."/>
            <person name="Weissman J.S."/>
        </authorList>
    </citation>
    <scope>LEVEL OF PROTEIN EXPRESSION [LARGE SCALE ANALYSIS]</scope>
</reference>
<evidence type="ECO:0000269" key="1">
    <source>
    </source>
</evidence>
<evidence type="ECO:0000269" key="2">
    <source>
    </source>
</evidence>
<evidence type="ECO:0000305" key="3"/>
<gene>
    <name type="primary">ATP7</name>
    <name type="ordered locus">YKL016C</name>
</gene>
<name>ATP7_YEAST</name>
<proteinExistence type="evidence at protein level"/>
<accession>P30902</accession>
<accession>D6VXS0</accession>
<organism>
    <name type="scientific">Saccharomyces cerevisiae (strain ATCC 204508 / S288c)</name>
    <name type="common">Baker's yeast</name>
    <dbReference type="NCBI Taxonomy" id="559292"/>
    <lineage>
        <taxon>Eukaryota</taxon>
        <taxon>Fungi</taxon>
        <taxon>Dikarya</taxon>
        <taxon>Ascomycota</taxon>
        <taxon>Saccharomycotina</taxon>
        <taxon>Saccharomycetes</taxon>
        <taxon>Saccharomycetales</taxon>
        <taxon>Saccharomycetaceae</taxon>
        <taxon>Saccharomyces</taxon>
    </lineage>
</organism>
<comment type="function">
    <text>Mitochondrial membrane ATP synthase (F(1)F(0) ATP synthase or Complex V) produces ATP from ADP in the presence of a proton gradient across the membrane which is generated by electron transport complexes of the respiratory chain. F-type ATPases consist of two structural domains, F(1) - containing the extramembraneous catalytic core, and F(0) - containing the membrane proton channel, linked together by a central stalk and a peripheral stalk. During catalysis, ATP synthesis in the catalytic domain of F(1) is coupled via a rotary mechanism of the central stalk subunits to proton translocation. Part of the complex F(0) domain and the peripheric stalk, which acts as a stator to hold the catalytic alpha(3)beta(3) subcomplex and subunit a/ATP6 static relative to the rotary elements.</text>
</comment>
<comment type="subunit">
    <text>F-type ATPases have 2 components, CF(1) - the catalytic core - and CF(0) - the membrane proton channel. In yeast, the dimeric form of ATP synthase consists of 17 polypeptides: alpha, beta, gamma, delta, epsilon, 4 (B), 5 (OSCP), 6 (A), 8, 9 (C), d, E (Tim11), f, g, h, i/j and k.</text>
</comment>
<comment type="subcellular location">
    <subcellularLocation>
        <location>Mitochondrion</location>
    </subcellularLocation>
    <subcellularLocation>
        <location>Mitochondrion inner membrane</location>
    </subcellularLocation>
</comment>
<comment type="miscellaneous">
    <text evidence="1">Present with 6820 molecules/cell in log phase SD medium.</text>
</comment>
<comment type="similarity">
    <text evidence="3">Belongs to the ATPase d subunit family.</text>
</comment>